<proteinExistence type="inferred from homology"/>
<sequence length="510" mass="58223">MLIYILSGLGVLVGALLGYVVAKRNIEKQLLLAKKDAEHIIKDAEKEASEIKKKAVIESREELHKLREEWEKERKEREEEIRYLEERLIKREEMVSKREELLDKKENYVEELRKELDQRQRDLEAKEKELTERFEKLAGITPAQAKEMVLEEAREKYEYEIAKVYSQIKARYEEDSEKYAKKVIADAIQRYAPEYSGEVTVSTIMLPNDDMKGRLIGREGRNIRAFEKVTGVDLIIDDTPEMVTVSCFNPLRREIAKRTIEKLVADGRIHPTRIEEMYEKAKAEVEKIIREAGQEATFVTGVGGLHPEIIKLLGRLKFRTSYGQNVLNHSIEVALIAGLIASELGVNVEKAKRGGLLHDIGKALDHEVEGSHTVIGAEILRRYGESREIINMVMAHHGEEEPVTPEAVIVAAADALSAARPGARREDVENYIKRLIKLEEIAKSFKYVENAYAIQAGREVRVIVQPDKIDDVLADKLSHDIAIKIEEELQYPGVLKVVVIREKRSVAYAK</sequence>
<reference key="1">
    <citation type="submission" date="2007-05" db="EMBL/GenBank/DDBJ databases">
        <title>Complete sequence of Thermosipho melanesiensis BI429.</title>
        <authorList>
            <consortium name="US DOE Joint Genome Institute"/>
            <person name="Copeland A."/>
            <person name="Lucas S."/>
            <person name="Lapidus A."/>
            <person name="Barry K."/>
            <person name="Glavina del Rio T."/>
            <person name="Dalin E."/>
            <person name="Tice H."/>
            <person name="Pitluck S."/>
            <person name="Chertkov O."/>
            <person name="Brettin T."/>
            <person name="Bruce D."/>
            <person name="Detter J.C."/>
            <person name="Han C."/>
            <person name="Schmutz J."/>
            <person name="Larimer F."/>
            <person name="Land M."/>
            <person name="Hauser L."/>
            <person name="Kyrpides N."/>
            <person name="Mikhailova N."/>
            <person name="Nelson K."/>
            <person name="Gogarten J.P."/>
            <person name="Noll K."/>
            <person name="Richardson P."/>
        </authorList>
    </citation>
    <scope>NUCLEOTIDE SEQUENCE [LARGE SCALE GENOMIC DNA]</scope>
    <source>
        <strain>DSM 12029 / CIP 104789 / BI429</strain>
    </source>
</reference>
<name>RNY_THEM4</name>
<keyword id="KW-1003">Cell membrane</keyword>
<keyword id="KW-0255">Endonuclease</keyword>
<keyword id="KW-0378">Hydrolase</keyword>
<keyword id="KW-0472">Membrane</keyword>
<keyword id="KW-0540">Nuclease</keyword>
<keyword id="KW-0694">RNA-binding</keyword>
<keyword id="KW-0812">Transmembrane</keyword>
<keyword id="KW-1133">Transmembrane helix</keyword>
<feature type="chain" id="PRO_0000344964" description="Ribonuclease Y">
    <location>
        <begin position="1"/>
        <end position="510"/>
    </location>
</feature>
<feature type="transmembrane region" description="Helical" evidence="1">
    <location>
        <begin position="1"/>
        <end position="21"/>
    </location>
</feature>
<feature type="domain" description="KH" evidence="1">
    <location>
        <begin position="200"/>
        <end position="260"/>
    </location>
</feature>
<feature type="domain" description="HD" evidence="2">
    <location>
        <begin position="326"/>
        <end position="419"/>
    </location>
</feature>
<gene>
    <name evidence="1" type="primary">rny</name>
    <name type="ordered locus">Tmel_1160</name>
</gene>
<evidence type="ECO:0000255" key="1">
    <source>
        <dbReference type="HAMAP-Rule" id="MF_00335"/>
    </source>
</evidence>
<evidence type="ECO:0000255" key="2">
    <source>
        <dbReference type="PROSITE-ProRule" id="PRU01175"/>
    </source>
</evidence>
<dbReference type="EC" id="3.1.-.-" evidence="1"/>
<dbReference type="EMBL" id="CP000716">
    <property type="protein sequence ID" value="ABR31015.1"/>
    <property type="molecule type" value="Genomic_DNA"/>
</dbReference>
<dbReference type="RefSeq" id="WP_012057374.1">
    <property type="nucleotide sequence ID" value="NC_009616.1"/>
</dbReference>
<dbReference type="SMR" id="A6LM64"/>
<dbReference type="STRING" id="391009.Tmel_1160"/>
<dbReference type="KEGG" id="tme:Tmel_1160"/>
<dbReference type="eggNOG" id="COG1418">
    <property type="taxonomic scope" value="Bacteria"/>
</dbReference>
<dbReference type="HOGENOM" id="CLU_028328_1_0_0"/>
<dbReference type="OrthoDB" id="9803205at2"/>
<dbReference type="Proteomes" id="UP000001110">
    <property type="component" value="Chromosome"/>
</dbReference>
<dbReference type="GO" id="GO:0005886">
    <property type="term" value="C:plasma membrane"/>
    <property type="evidence" value="ECO:0007669"/>
    <property type="project" value="UniProtKB-SubCell"/>
</dbReference>
<dbReference type="GO" id="GO:0003723">
    <property type="term" value="F:RNA binding"/>
    <property type="evidence" value="ECO:0007669"/>
    <property type="project" value="UniProtKB-UniRule"/>
</dbReference>
<dbReference type="GO" id="GO:0004521">
    <property type="term" value="F:RNA endonuclease activity"/>
    <property type="evidence" value="ECO:0007669"/>
    <property type="project" value="UniProtKB-UniRule"/>
</dbReference>
<dbReference type="GO" id="GO:0006402">
    <property type="term" value="P:mRNA catabolic process"/>
    <property type="evidence" value="ECO:0007669"/>
    <property type="project" value="UniProtKB-UniRule"/>
</dbReference>
<dbReference type="CDD" id="cd00077">
    <property type="entry name" value="HDc"/>
    <property type="match status" value="1"/>
</dbReference>
<dbReference type="CDD" id="cd22431">
    <property type="entry name" value="KH-I_RNaseY"/>
    <property type="match status" value="1"/>
</dbReference>
<dbReference type="FunFam" id="1.10.3210.10:FF:000022">
    <property type="entry name" value="Ribonuclease Y"/>
    <property type="match status" value="1"/>
</dbReference>
<dbReference type="Gene3D" id="1.10.3210.10">
    <property type="entry name" value="Hypothetical protein af1432"/>
    <property type="match status" value="1"/>
</dbReference>
<dbReference type="HAMAP" id="MF_00335">
    <property type="entry name" value="RNase_Y"/>
    <property type="match status" value="1"/>
</dbReference>
<dbReference type="InterPro" id="IPR003607">
    <property type="entry name" value="HD/PDEase_dom"/>
</dbReference>
<dbReference type="InterPro" id="IPR006674">
    <property type="entry name" value="HD_domain"/>
</dbReference>
<dbReference type="InterPro" id="IPR006675">
    <property type="entry name" value="HDIG_dom"/>
</dbReference>
<dbReference type="InterPro" id="IPR004087">
    <property type="entry name" value="KH_dom"/>
</dbReference>
<dbReference type="InterPro" id="IPR004088">
    <property type="entry name" value="KH_dom_type_1"/>
</dbReference>
<dbReference type="InterPro" id="IPR036612">
    <property type="entry name" value="KH_dom_type_1_sf"/>
</dbReference>
<dbReference type="InterPro" id="IPR017705">
    <property type="entry name" value="Ribonuclease_Y"/>
</dbReference>
<dbReference type="InterPro" id="IPR022711">
    <property type="entry name" value="RNase_Y_N"/>
</dbReference>
<dbReference type="NCBIfam" id="TIGR00277">
    <property type="entry name" value="HDIG"/>
    <property type="match status" value="1"/>
</dbReference>
<dbReference type="NCBIfam" id="TIGR03319">
    <property type="entry name" value="RNase_Y"/>
    <property type="match status" value="1"/>
</dbReference>
<dbReference type="PANTHER" id="PTHR12826">
    <property type="entry name" value="RIBONUCLEASE Y"/>
    <property type="match status" value="1"/>
</dbReference>
<dbReference type="PANTHER" id="PTHR12826:SF15">
    <property type="entry name" value="RIBONUCLEASE Y"/>
    <property type="match status" value="1"/>
</dbReference>
<dbReference type="Pfam" id="PF01966">
    <property type="entry name" value="HD"/>
    <property type="match status" value="1"/>
</dbReference>
<dbReference type="Pfam" id="PF00013">
    <property type="entry name" value="KH_1"/>
    <property type="match status" value="1"/>
</dbReference>
<dbReference type="Pfam" id="PF12072">
    <property type="entry name" value="RNase_Y_N"/>
    <property type="match status" value="1"/>
</dbReference>
<dbReference type="SMART" id="SM00471">
    <property type="entry name" value="HDc"/>
    <property type="match status" value="1"/>
</dbReference>
<dbReference type="SMART" id="SM00322">
    <property type="entry name" value="KH"/>
    <property type="match status" value="1"/>
</dbReference>
<dbReference type="SUPFAM" id="SSF54791">
    <property type="entry name" value="Eukaryotic type KH-domain (KH-domain type I)"/>
    <property type="match status" value="1"/>
</dbReference>
<dbReference type="SUPFAM" id="SSF109604">
    <property type="entry name" value="HD-domain/PDEase-like"/>
    <property type="match status" value="1"/>
</dbReference>
<dbReference type="PROSITE" id="PS51831">
    <property type="entry name" value="HD"/>
    <property type="match status" value="1"/>
</dbReference>
<dbReference type="PROSITE" id="PS50084">
    <property type="entry name" value="KH_TYPE_1"/>
    <property type="match status" value="1"/>
</dbReference>
<organism>
    <name type="scientific">Thermosipho melanesiensis (strain DSM 12029 / CIP 104789 / BI429)</name>
    <dbReference type="NCBI Taxonomy" id="391009"/>
    <lineage>
        <taxon>Bacteria</taxon>
        <taxon>Thermotogati</taxon>
        <taxon>Thermotogota</taxon>
        <taxon>Thermotogae</taxon>
        <taxon>Thermotogales</taxon>
        <taxon>Fervidobacteriaceae</taxon>
        <taxon>Thermosipho</taxon>
    </lineage>
</organism>
<protein>
    <recommendedName>
        <fullName evidence="1">Ribonuclease Y</fullName>
        <shortName evidence="1">RNase Y</shortName>
        <ecNumber evidence="1">3.1.-.-</ecNumber>
    </recommendedName>
</protein>
<accession>A6LM64</accession>
<comment type="function">
    <text evidence="1">Endoribonuclease that initiates mRNA decay.</text>
</comment>
<comment type="subcellular location">
    <subcellularLocation>
        <location evidence="1">Cell membrane</location>
        <topology evidence="1">Single-pass membrane protein</topology>
    </subcellularLocation>
</comment>
<comment type="similarity">
    <text evidence="1">Belongs to the RNase Y family.</text>
</comment>